<accession>O31832</accession>
<keyword id="KW-1185">Reference proteome</keyword>
<keyword id="KW-0732">Signal</keyword>
<proteinExistence type="inferred from homology"/>
<feature type="signal peptide" evidence="1">
    <location>
        <begin position="1"/>
        <end position="25"/>
    </location>
</feature>
<feature type="chain" id="PRO_0000013722" description="Uncharacterized protein YozF">
    <location>
        <begin position="26"/>
        <end position="165"/>
    </location>
</feature>
<evidence type="ECO:0000255" key="1"/>
<sequence>MKRVLFSVIVFTAVGFTFCQSKAHALTFTVLPITQKTDQWSVKVSEAKNVKEFTRPHKGEYQVYSLEVKNIGEKAATVDVQLYRNDPNSITRFSLFGCPDENCVKPKEDSKMLAESLNDGSPLKFNHFMLADKASELEVVIIWTQKGQEGRNLKQTFKFTEDGVN</sequence>
<protein>
    <recommendedName>
        <fullName>Uncharacterized protein YozF</fullName>
    </recommendedName>
</protein>
<reference key="1">
    <citation type="journal article" date="1997" name="Nature">
        <title>The complete genome sequence of the Gram-positive bacterium Bacillus subtilis.</title>
        <authorList>
            <person name="Kunst F."/>
            <person name="Ogasawara N."/>
            <person name="Moszer I."/>
            <person name="Albertini A.M."/>
            <person name="Alloni G."/>
            <person name="Azevedo V."/>
            <person name="Bertero M.G."/>
            <person name="Bessieres P."/>
            <person name="Bolotin A."/>
            <person name="Borchert S."/>
            <person name="Borriss R."/>
            <person name="Boursier L."/>
            <person name="Brans A."/>
            <person name="Braun M."/>
            <person name="Brignell S.C."/>
            <person name="Bron S."/>
            <person name="Brouillet S."/>
            <person name="Bruschi C.V."/>
            <person name="Caldwell B."/>
            <person name="Capuano V."/>
            <person name="Carter N.M."/>
            <person name="Choi S.-K."/>
            <person name="Codani J.-J."/>
            <person name="Connerton I.F."/>
            <person name="Cummings N.J."/>
            <person name="Daniel R.A."/>
            <person name="Denizot F."/>
            <person name="Devine K.M."/>
            <person name="Duesterhoeft A."/>
            <person name="Ehrlich S.D."/>
            <person name="Emmerson P.T."/>
            <person name="Entian K.-D."/>
            <person name="Errington J."/>
            <person name="Fabret C."/>
            <person name="Ferrari E."/>
            <person name="Foulger D."/>
            <person name="Fritz C."/>
            <person name="Fujita M."/>
            <person name="Fujita Y."/>
            <person name="Fuma S."/>
            <person name="Galizzi A."/>
            <person name="Galleron N."/>
            <person name="Ghim S.-Y."/>
            <person name="Glaser P."/>
            <person name="Goffeau A."/>
            <person name="Golightly E.J."/>
            <person name="Grandi G."/>
            <person name="Guiseppi G."/>
            <person name="Guy B.J."/>
            <person name="Haga K."/>
            <person name="Haiech J."/>
            <person name="Harwood C.R."/>
            <person name="Henaut A."/>
            <person name="Hilbert H."/>
            <person name="Holsappel S."/>
            <person name="Hosono S."/>
            <person name="Hullo M.-F."/>
            <person name="Itaya M."/>
            <person name="Jones L.-M."/>
            <person name="Joris B."/>
            <person name="Karamata D."/>
            <person name="Kasahara Y."/>
            <person name="Klaerr-Blanchard M."/>
            <person name="Klein C."/>
            <person name="Kobayashi Y."/>
            <person name="Koetter P."/>
            <person name="Koningstein G."/>
            <person name="Krogh S."/>
            <person name="Kumano M."/>
            <person name="Kurita K."/>
            <person name="Lapidus A."/>
            <person name="Lardinois S."/>
            <person name="Lauber J."/>
            <person name="Lazarevic V."/>
            <person name="Lee S.-M."/>
            <person name="Levine A."/>
            <person name="Liu H."/>
            <person name="Masuda S."/>
            <person name="Mauel C."/>
            <person name="Medigue C."/>
            <person name="Medina N."/>
            <person name="Mellado R.P."/>
            <person name="Mizuno M."/>
            <person name="Moestl D."/>
            <person name="Nakai S."/>
            <person name="Noback M."/>
            <person name="Noone D."/>
            <person name="O'Reilly M."/>
            <person name="Ogawa K."/>
            <person name="Ogiwara A."/>
            <person name="Oudega B."/>
            <person name="Park S.-H."/>
            <person name="Parro V."/>
            <person name="Pohl T.M."/>
            <person name="Portetelle D."/>
            <person name="Porwollik S."/>
            <person name="Prescott A.M."/>
            <person name="Presecan E."/>
            <person name="Pujic P."/>
            <person name="Purnelle B."/>
            <person name="Rapoport G."/>
            <person name="Rey M."/>
            <person name="Reynolds S."/>
            <person name="Rieger M."/>
            <person name="Rivolta C."/>
            <person name="Rocha E."/>
            <person name="Roche B."/>
            <person name="Rose M."/>
            <person name="Sadaie Y."/>
            <person name="Sato T."/>
            <person name="Scanlan E."/>
            <person name="Schleich S."/>
            <person name="Schroeter R."/>
            <person name="Scoffone F."/>
            <person name="Sekiguchi J."/>
            <person name="Sekowska A."/>
            <person name="Seror S.J."/>
            <person name="Serror P."/>
            <person name="Shin B.-S."/>
            <person name="Soldo B."/>
            <person name="Sorokin A."/>
            <person name="Tacconi E."/>
            <person name="Takagi T."/>
            <person name="Takahashi H."/>
            <person name="Takemaru K."/>
            <person name="Takeuchi M."/>
            <person name="Tamakoshi A."/>
            <person name="Tanaka T."/>
            <person name="Terpstra P."/>
            <person name="Tognoni A."/>
            <person name="Tosato V."/>
            <person name="Uchiyama S."/>
            <person name="Vandenbol M."/>
            <person name="Vannier F."/>
            <person name="Vassarotti A."/>
            <person name="Viari A."/>
            <person name="Wambutt R."/>
            <person name="Wedler E."/>
            <person name="Wedler H."/>
            <person name="Weitzenegger T."/>
            <person name="Winters P."/>
            <person name="Wipat A."/>
            <person name="Yamamoto H."/>
            <person name="Yamane K."/>
            <person name="Yasumoto K."/>
            <person name="Yata K."/>
            <person name="Yoshida K."/>
            <person name="Yoshikawa H.-F."/>
            <person name="Zumstein E."/>
            <person name="Yoshikawa H."/>
            <person name="Danchin A."/>
        </authorList>
    </citation>
    <scope>NUCLEOTIDE SEQUENCE [LARGE SCALE GENOMIC DNA]</scope>
    <source>
        <strain>168</strain>
    </source>
</reference>
<reference key="2">
    <citation type="journal article" date="2009" name="Microbiology">
        <title>From a consortium sequence to a unified sequence: the Bacillus subtilis 168 reference genome a decade later.</title>
        <authorList>
            <person name="Barbe V."/>
            <person name="Cruveiller S."/>
            <person name="Kunst F."/>
            <person name="Lenoble P."/>
            <person name="Meurice G."/>
            <person name="Sekowska A."/>
            <person name="Vallenet D."/>
            <person name="Wang T."/>
            <person name="Moszer I."/>
            <person name="Medigue C."/>
            <person name="Danchin A."/>
        </authorList>
    </citation>
    <scope>SEQUENCE REVISION TO C-TERMINUS</scope>
</reference>
<name>YOZF_BACSU</name>
<organism>
    <name type="scientific">Bacillus subtilis (strain 168)</name>
    <dbReference type="NCBI Taxonomy" id="224308"/>
    <lineage>
        <taxon>Bacteria</taxon>
        <taxon>Bacillati</taxon>
        <taxon>Bacillota</taxon>
        <taxon>Bacilli</taxon>
        <taxon>Bacillales</taxon>
        <taxon>Bacillaceae</taxon>
        <taxon>Bacillus</taxon>
    </lineage>
</organism>
<gene>
    <name type="primary">yozF</name>
    <name type="ordered locus">BSU18710</name>
</gene>
<dbReference type="EMBL" id="AL009126">
    <property type="protein sequence ID" value="CAB13763.2"/>
    <property type="molecule type" value="Genomic_DNA"/>
</dbReference>
<dbReference type="PIR" id="B69931">
    <property type="entry name" value="B69931"/>
</dbReference>
<dbReference type="RefSeq" id="NP_389752.2">
    <property type="nucleotide sequence ID" value="NC_000964.3"/>
</dbReference>
<dbReference type="RefSeq" id="WP_003231402.1">
    <property type="nucleotide sequence ID" value="NZ_OZ025638.1"/>
</dbReference>
<dbReference type="FunCoup" id="O31832">
    <property type="interactions" value="47"/>
</dbReference>
<dbReference type="STRING" id="224308.BSU18710"/>
<dbReference type="PaxDb" id="224308-BSU18710"/>
<dbReference type="EnsemblBacteria" id="CAB13763">
    <property type="protein sequence ID" value="CAB13763"/>
    <property type="gene ID" value="BSU_18710"/>
</dbReference>
<dbReference type="GeneID" id="939598"/>
<dbReference type="KEGG" id="bsu:BSU18710"/>
<dbReference type="PATRIC" id="fig|224308.179.peg.2040"/>
<dbReference type="eggNOG" id="ENOG5033IVQ">
    <property type="taxonomic scope" value="Bacteria"/>
</dbReference>
<dbReference type="InParanoid" id="O31832"/>
<dbReference type="OrthoDB" id="337762at2"/>
<dbReference type="BioCyc" id="BSUB:BSU18710-MONOMER"/>
<dbReference type="Proteomes" id="UP000001570">
    <property type="component" value="Chromosome"/>
</dbReference>